<protein>
    <recommendedName>
        <fullName>Transcriptional repressor scratch 2</fullName>
    </recommendedName>
    <alternativeName>
        <fullName>Scratch homolog 2 zinc finger protein</fullName>
    </alternativeName>
</protein>
<name>SCRT2_MOUSE</name>
<proteinExistence type="evidence at transcript level"/>
<reference key="1">
    <citation type="journal article" date="2009" name="PLoS Biol.">
        <title>Lineage-specific biology revealed by a finished genome assembly of the mouse.</title>
        <authorList>
            <person name="Church D.M."/>
            <person name="Goodstadt L."/>
            <person name="Hillier L.W."/>
            <person name="Zody M.C."/>
            <person name="Goldstein S."/>
            <person name="She X."/>
            <person name="Bult C.J."/>
            <person name="Agarwala R."/>
            <person name="Cherry J.L."/>
            <person name="DiCuccio M."/>
            <person name="Hlavina W."/>
            <person name="Kapustin Y."/>
            <person name="Meric P."/>
            <person name="Maglott D."/>
            <person name="Birtle Z."/>
            <person name="Marques A.C."/>
            <person name="Graves T."/>
            <person name="Zhou S."/>
            <person name="Teague B."/>
            <person name="Potamousis K."/>
            <person name="Churas C."/>
            <person name="Place M."/>
            <person name="Herschleb J."/>
            <person name="Runnheim R."/>
            <person name="Forrest D."/>
            <person name="Amos-Landgraf J."/>
            <person name="Schwartz D.C."/>
            <person name="Cheng Z."/>
            <person name="Lindblad-Toh K."/>
            <person name="Eichler E.E."/>
            <person name="Ponting C.P."/>
        </authorList>
    </citation>
    <scope>NUCLEOTIDE SEQUENCE [LARGE SCALE GENOMIC DNA]</scope>
    <source>
        <strain>C57BL/6J</strain>
    </source>
</reference>
<reference key="2">
    <citation type="journal article" date="2005" name="Science">
        <title>The transcriptional landscape of the mammalian genome.</title>
        <authorList>
            <person name="Carninci P."/>
            <person name="Kasukawa T."/>
            <person name="Katayama S."/>
            <person name="Gough J."/>
            <person name="Frith M.C."/>
            <person name="Maeda N."/>
            <person name="Oyama R."/>
            <person name="Ravasi T."/>
            <person name="Lenhard B."/>
            <person name="Wells C."/>
            <person name="Kodzius R."/>
            <person name="Shimokawa K."/>
            <person name="Bajic V.B."/>
            <person name="Brenner S.E."/>
            <person name="Batalov S."/>
            <person name="Forrest A.R."/>
            <person name="Zavolan M."/>
            <person name="Davis M.J."/>
            <person name="Wilming L.G."/>
            <person name="Aidinis V."/>
            <person name="Allen J.E."/>
            <person name="Ambesi-Impiombato A."/>
            <person name="Apweiler R."/>
            <person name="Aturaliya R.N."/>
            <person name="Bailey T.L."/>
            <person name="Bansal M."/>
            <person name="Baxter L."/>
            <person name="Beisel K.W."/>
            <person name="Bersano T."/>
            <person name="Bono H."/>
            <person name="Chalk A.M."/>
            <person name="Chiu K.P."/>
            <person name="Choudhary V."/>
            <person name="Christoffels A."/>
            <person name="Clutterbuck D.R."/>
            <person name="Crowe M.L."/>
            <person name="Dalla E."/>
            <person name="Dalrymple B.P."/>
            <person name="de Bono B."/>
            <person name="Della Gatta G."/>
            <person name="di Bernardo D."/>
            <person name="Down T."/>
            <person name="Engstrom P."/>
            <person name="Fagiolini M."/>
            <person name="Faulkner G."/>
            <person name="Fletcher C.F."/>
            <person name="Fukushima T."/>
            <person name="Furuno M."/>
            <person name="Futaki S."/>
            <person name="Gariboldi M."/>
            <person name="Georgii-Hemming P."/>
            <person name="Gingeras T.R."/>
            <person name="Gojobori T."/>
            <person name="Green R.E."/>
            <person name="Gustincich S."/>
            <person name="Harbers M."/>
            <person name="Hayashi Y."/>
            <person name="Hensch T.K."/>
            <person name="Hirokawa N."/>
            <person name="Hill D."/>
            <person name="Huminiecki L."/>
            <person name="Iacono M."/>
            <person name="Ikeo K."/>
            <person name="Iwama A."/>
            <person name="Ishikawa T."/>
            <person name="Jakt M."/>
            <person name="Kanapin A."/>
            <person name="Katoh M."/>
            <person name="Kawasawa Y."/>
            <person name="Kelso J."/>
            <person name="Kitamura H."/>
            <person name="Kitano H."/>
            <person name="Kollias G."/>
            <person name="Krishnan S.P."/>
            <person name="Kruger A."/>
            <person name="Kummerfeld S.K."/>
            <person name="Kurochkin I.V."/>
            <person name="Lareau L.F."/>
            <person name="Lazarevic D."/>
            <person name="Lipovich L."/>
            <person name="Liu J."/>
            <person name="Liuni S."/>
            <person name="McWilliam S."/>
            <person name="Madan Babu M."/>
            <person name="Madera M."/>
            <person name="Marchionni L."/>
            <person name="Matsuda H."/>
            <person name="Matsuzawa S."/>
            <person name="Miki H."/>
            <person name="Mignone F."/>
            <person name="Miyake S."/>
            <person name="Morris K."/>
            <person name="Mottagui-Tabar S."/>
            <person name="Mulder N."/>
            <person name="Nakano N."/>
            <person name="Nakauchi H."/>
            <person name="Ng P."/>
            <person name="Nilsson R."/>
            <person name="Nishiguchi S."/>
            <person name="Nishikawa S."/>
            <person name="Nori F."/>
            <person name="Ohara O."/>
            <person name="Okazaki Y."/>
            <person name="Orlando V."/>
            <person name="Pang K.C."/>
            <person name="Pavan W.J."/>
            <person name="Pavesi G."/>
            <person name="Pesole G."/>
            <person name="Petrovsky N."/>
            <person name="Piazza S."/>
            <person name="Reed J."/>
            <person name="Reid J.F."/>
            <person name="Ring B.Z."/>
            <person name="Ringwald M."/>
            <person name="Rost B."/>
            <person name="Ruan Y."/>
            <person name="Salzberg S.L."/>
            <person name="Sandelin A."/>
            <person name="Schneider C."/>
            <person name="Schoenbach C."/>
            <person name="Sekiguchi K."/>
            <person name="Semple C.A."/>
            <person name="Seno S."/>
            <person name="Sessa L."/>
            <person name="Sheng Y."/>
            <person name="Shibata Y."/>
            <person name="Shimada H."/>
            <person name="Shimada K."/>
            <person name="Silva D."/>
            <person name="Sinclair B."/>
            <person name="Sperling S."/>
            <person name="Stupka E."/>
            <person name="Sugiura K."/>
            <person name="Sultana R."/>
            <person name="Takenaka Y."/>
            <person name="Taki K."/>
            <person name="Tammoja K."/>
            <person name="Tan S.L."/>
            <person name="Tang S."/>
            <person name="Taylor M.S."/>
            <person name="Tegner J."/>
            <person name="Teichmann S.A."/>
            <person name="Ueda H.R."/>
            <person name="van Nimwegen E."/>
            <person name="Verardo R."/>
            <person name="Wei C.L."/>
            <person name="Yagi K."/>
            <person name="Yamanishi H."/>
            <person name="Zabarovsky E."/>
            <person name="Zhu S."/>
            <person name="Zimmer A."/>
            <person name="Hide W."/>
            <person name="Bult C."/>
            <person name="Grimmond S.M."/>
            <person name="Teasdale R.D."/>
            <person name="Liu E.T."/>
            <person name="Brusic V."/>
            <person name="Quackenbush J."/>
            <person name="Wahlestedt C."/>
            <person name="Mattick J.S."/>
            <person name="Hume D.A."/>
            <person name="Kai C."/>
            <person name="Sasaki D."/>
            <person name="Tomaru Y."/>
            <person name="Fukuda S."/>
            <person name="Kanamori-Katayama M."/>
            <person name="Suzuki M."/>
            <person name="Aoki J."/>
            <person name="Arakawa T."/>
            <person name="Iida J."/>
            <person name="Imamura K."/>
            <person name="Itoh M."/>
            <person name="Kato T."/>
            <person name="Kawaji H."/>
            <person name="Kawagashira N."/>
            <person name="Kawashima T."/>
            <person name="Kojima M."/>
            <person name="Kondo S."/>
            <person name="Konno H."/>
            <person name="Nakano K."/>
            <person name="Ninomiya N."/>
            <person name="Nishio T."/>
            <person name="Okada M."/>
            <person name="Plessy C."/>
            <person name="Shibata K."/>
            <person name="Shiraki T."/>
            <person name="Suzuki S."/>
            <person name="Tagami M."/>
            <person name="Waki K."/>
            <person name="Watahiki A."/>
            <person name="Okamura-Oho Y."/>
            <person name="Suzuki H."/>
            <person name="Kawai J."/>
            <person name="Hayashizaki Y."/>
        </authorList>
    </citation>
    <scope>NUCLEOTIDE SEQUENCE [LARGE SCALE MRNA] OF 145-311</scope>
    <source>
        <strain>C57BL/6J</strain>
        <tissue>Spinal cord</tissue>
    </source>
</reference>
<keyword id="KW-0238">DNA-binding</keyword>
<keyword id="KW-0479">Metal-binding</keyword>
<keyword id="KW-0539">Nucleus</keyword>
<keyword id="KW-1185">Reference proteome</keyword>
<keyword id="KW-0677">Repeat</keyword>
<keyword id="KW-0804">Transcription</keyword>
<keyword id="KW-0805">Transcription regulation</keyword>
<keyword id="KW-0862">Zinc</keyword>
<keyword id="KW-0863">Zinc-finger</keyword>
<dbReference type="EMBL" id="AL845161">
    <property type="status" value="NOT_ANNOTATED_CDS"/>
    <property type="molecule type" value="Genomic_DNA"/>
</dbReference>
<dbReference type="EMBL" id="AK090280">
    <property type="protein sequence ID" value="BAC41156.1"/>
    <property type="molecule type" value="mRNA"/>
</dbReference>
<dbReference type="CCDS" id="CCDS50750.1"/>
<dbReference type="RefSeq" id="NP_001153882.1">
    <property type="nucleotide sequence ID" value="NM_001160410.2"/>
</dbReference>
<dbReference type="SMR" id="Q8BTH6"/>
<dbReference type="FunCoup" id="Q8BTH6">
    <property type="interactions" value="555"/>
</dbReference>
<dbReference type="STRING" id="10090.ENSMUSP00000066280"/>
<dbReference type="iPTMnet" id="Q8BTH6"/>
<dbReference type="PhosphoSitePlus" id="Q8BTH6"/>
<dbReference type="PaxDb" id="10090-ENSMUSP00000066280"/>
<dbReference type="ProteomicsDB" id="255371"/>
<dbReference type="Antibodypedia" id="23001">
    <property type="antibodies" value="31 antibodies from 11 providers"/>
</dbReference>
<dbReference type="Ensembl" id="ENSMUST00000064061.4">
    <property type="protein sequence ID" value="ENSMUSP00000066280.4"/>
    <property type="gene ID" value="ENSMUSG00000060257.3"/>
</dbReference>
<dbReference type="GeneID" id="545474"/>
<dbReference type="KEGG" id="mmu:545474"/>
<dbReference type="UCSC" id="uc012cgb.1">
    <property type="organism name" value="mouse"/>
</dbReference>
<dbReference type="AGR" id="MGI:2139287"/>
<dbReference type="CTD" id="85508"/>
<dbReference type="MGI" id="MGI:2139287">
    <property type="gene designation" value="Scrt2"/>
</dbReference>
<dbReference type="VEuPathDB" id="HostDB:ENSMUSG00000060257"/>
<dbReference type="eggNOG" id="KOG2462">
    <property type="taxonomic scope" value="Eukaryota"/>
</dbReference>
<dbReference type="GeneTree" id="ENSGT00940000154491"/>
<dbReference type="HOGENOM" id="CLU_002678_42_3_1"/>
<dbReference type="InParanoid" id="Q8BTH6"/>
<dbReference type="OMA" id="TQRHTCS"/>
<dbReference type="OrthoDB" id="5428132at2759"/>
<dbReference type="PhylomeDB" id="Q8BTH6"/>
<dbReference type="TreeFam" id="TF315515"/>
<dbReference type="BioGRID-ORCS" id="545474">
    <property type="hits" value="2 hits in 79 CRISPR screens"/>
</dbReference>
<dbReference type="ChiTaRS" id="Scrt2">
    <property type="organism name" value="mouse"/>
</dbReference>
<dbReference type="PRO" id="PR:Q8BTH6"/>
<dbReference type="Proteomes" id="UP000000589">
    <property type="component" value="Chromosome 2"/>
</dbReference>
<dbReference type="RNAct" id="Q8BTH6">
    <property type="molecule type" value="protein"/>
</dbReference>
<dbReference type="Bgee" id="ENSMUSG00000060257">
    <property type="expression patterns" value="Expressed in lumbar dorsal root ganglion and 76 other cell types or tissues"/>
</dbReference>
<dbReference type="GO" id="GO:0005634">
    <property type="term" value="C:nucleus"/>
    <property type="evidence" value="ECO:0000314"/>
    <property type="project" value="MGI"/>
</dbReference>
<dbReference type="GO" id="GO:1990837">
    <property type="term" value="F:sequence-specific double-stranded DNA binding"/>
    <property type="evidence" value="ECO:0007669"/>
    <property type="project" value="Ensembl"/>
</dbReference>
<dbReference type="GO" id="GO:0008270">
    <property type="term" value="F:zinc ion binding"/>
    <property type="evidence" value="ECO:0007669"/>
    <property type="project" value="UniProtKB-KW"/>
</dbReference>
<dbReference type="GO" id="GO:0000122">
    <property type="term" value="P:negative regulation of transcription by RNA polymerase II"/>
    <property type="evidence" value="ECO:0000314"/>
    <property type="project" value="MGI"/>
</dbReference>
<dbReference type="GO" id="GO:2001222">
    <property type="term" value="P:regulation of neuron migration"/>
    <property type="evidence" value="ECO:0000315"/>
    <property type="project" value="MGI"/>
</dbReference>
<dbReference type="FunFam" id="3.30.160.60:FF:000560">
    <property type="entry name" value="Scratch family transcriptional repressor 1"/>
    <property type="match status" value="1"/>
</dbReference>
<dbReference type="FunFam" id="3.30.160.60:FF:000043">
    <property type="entry name" value="Scratch family zinc finger 2"/>
    <property type="match status" value="1"/>
</dbReference>
<dbReference type="FunFam" id="3.30.160.60:FF:000169">
    <property type="entry name" value="transcriptional repressor scratch 2"/>
    <property type="match status" value="1"/>
</dbReference>
<dbReference type="Gene3D" id="3.30.160.60">
    <property type="entry name" value="Classic Zinc Finger"/>
    <property type="match status" value="3"/>
</dbReference>
<dbReference type="InterPro" id="IPR050527">
    <property type="entry name" value="Snail/Krueppel_Znf"/>
</dbReference>
<dbReference type="InterPro" id="IPR036236">
    <property type="entry name" value="Znf_C2H2_sf"/>
</dbReference>
<dbReference type="InterPro" id="IPR013087">
    <property type="entry name" value="Znf_C2H2_type"/>
</dbReference>
<dbReference type="PANTHER" id="PTHR24388:SF48">
    <property type="entry name" value="TRANSCRIPTIONAL REPRESSOR SCRATCH 2"/>
    <property type="match status" value="1"/>
</dbReference>
<dbReference type="PANTHER" id="PTHR24388">
    <property type="entry name" value="ZINC FINGER PROTEIN"/>
    <property type="match status" value="1"/>
</dbReference>
<dbReference type="Pfam" id="PF00096">
    <property type="entry name" value="zf-C2H2"/>
    <property type="match status" value="3"/>
</dbReference>
<dbReference type="Pfam" id="PF13912">
    <property type="entry name" value="zf-C2H2_6"/>
    <property type="match status" value="1"/>
</dbReference>
<dbReference type="SMART" id="SM00355">
    <property type="entry name" value="ZnF_C2H2"/>
    <property type="match status" value="5"/>
</dbReference>
<dbReference type="SUPFAM" id="SSF57667">
    <property type="entry name" value="beta-beta-alpha zinc fingers"/>
    <property type="match status" value="2"/>
</dbReference>
<dbReference type="PROSITE" id="PS00028">
    <property type="entry name" value="ZINC_FINGER_C2H2_1"/>
    <property type="match status" value="4"/>
</dbReference>
<dbReference type="PROSITE" id="PS50157">
    <property type="entry name" value="ZINC_FINGER_C2H2_2"/>
    <property type="match status" value="5"/>
</dbReference>
<comment type="function">
    <text>May be involved in transcriptional regulation.</text>
</comment>
<comment type="subcellular location">
    <subcellularLocation>
        <location evidence="4">Nucleus</location>
    </subcellularLocation>
</comment>
<comment type="similarity">
    <text evidence="4">Belongs to the snail C2H2-type zinc-finger protein family.</text>
</comment>
<gene>
    <name type="primary">Scrt2</name>
</gene>
<evidence type="ECO:0000250" key="1"/>
<evidence type="ECO:0000255" key="2">
    <source>
        <dbReference type="PROSITE-ProRule" id="PRU00042"/>
    </source>
</evidence>
<evidence type="ECO:0000256" key="3">
    <source>
        <dbReference type="SAM" id="MobiDB-lite"/>
    </source>
</evidence>
<evidence type="ECO:0000305" key="4"/>
<accession>Q8BTH6</accession>
<accession>A2AQU7</accession>
<sequence length="311" mass="32722">MPRSFLVKKIKADGFQCSGVSAPTYHPLETAYVLPGTRGPPGDNGYVAHCLPPSGYDGEQKPGLELAPAEPAYPAAASEEYSDPESPQSSLSARYFRGEAAVTDSYSMDAFFISDGRSRRRRAGAGGDAAGAGDAGGGGGGGGGGERAGRSGATAGGGHRHACAECGKTYATSSNLSRHKQTHRSLDSQLARKCPTCGKAYVSMPALAMHVLTHNLRHKCGVCGKAFSRPWLLQGHMRSHTGEKPFGCAHCGKAFADRSNLRAHMQTHSAFKHYRCRQCDKSFALKSYLHKHCEAACVKAAEPPPSAGPAS</sequence>
<organism>
    <name type="scientific">Mus musculus</name>
    <name type="common">Mouse</name>
    <dbReference type="NCBI Taxonomy" id="10090"/>
    <lineage>
        <taxon>Eukaryota</taxon>
        <taxon>Metazoa</taxon>
        <taxon>Chordata</taxon>
        <taxon>Craniata</taxon>
        <taxon>Vertebrata</taxon>
        <taxon>Euteleostomi</taxon>
        <taxon>Mammalia</taxon>
        <taxon>Eutheria</taxon>
        <taxon>Euarchontoglires</taxon>
        <taxon>Glires</taxon>
        <taxon>Rodentia</taxon>
        <taxon>Myomorpha</taxon>
        <taxon>Muroidea</taxon>
        <taxon>Muridae</taxon>
        <taxon>Murinae</taxon>
        <taxon>Mus</taxon>
        <taxon>Mus</taxon>
    </lineage>
</organism>
<feature type="chain" id="PRO_0000047039" description="Transcriptional repressor scratch 2">
    <location>
        <begin position="1"/>
        <end position="311"/>
    </location>
</feature>
<feature type="zinc finger region" description="C2H2-type 1" evidence="2">
    <location>
        <begin position="161"/>
        <end position="183"/>
    </location>
</feature>
<feature type="zinc finger region" description="C2H2-type 2" evidence="2">
    <location>
        <begin position="192"/>
        <end position="214"/>
    </location>
</feature>
<feature type="zinc finger region" description="C2H2-type 3" evidence="2">
    <location>
        <begin position="218"/>
        <end position="240"/>
    </location>
</feature>
<feature type="zinc finger region" description="C2H2-type 4" evidence="2">
    <location>
        <begin position="246"/>
        <end position="268"/>
    </location>
</feature>
<feature type="zinc finger region" description="C2H2-type 5; atypical" evidence="2">
    <location>
        <begin position="274"/>
        <end position="297"/>
    </location>
</feature>
<feature type="region of interest" description="SNAG domain" evidence="1">
    <location>
        <begin position="1"/>
        <end position="20"/>
    </location>
</feature>
<feature type="region of interest" description="Disordered" evidence="3">
    <location>
        <begin position="71"/>
        <end position="90"/>
    </location>
</feature>
<feature type="region of interest" description="Disordered" evidence="3">
    <location>
        <begin position="120"/>
        <end position="156"/>
    </location>
</feature>
<feature type="compositionally biased region" description="Gly residues" evidence="3">
    <location>
        <begin position="124"/>
        <end position="146"/>
    </location>
</feature>